<accession>Q9D358</accession>
<accession>O88739</accession>
<accession>O88740</accession>
<accession>Q9QWF5</accession>
<feature type="initiator methionine" description="Removed" evidence="2">
    <location>
        <position position="1"/>
    </location>
</feature>
<feature type="chain" id="PRO_0000046559" description="Low molecular weight phosphotyrosine protein phosphatase">
    <location>
        <begin position="2"/>
        <end position="158"/>
    </location>
</feature>
<feature type="active site" description="Nucleophile" evidence="2">
    <location>
        <position position="13"/>
    </location>
</feature>
<feature type="active site" evidence="2">
    <location>
        <position position="19"/>
    </location>
</feature>
<feature type="active site" description="Proton donor" evidence="2">
    <location>
        <position position="130"/>
    </location>
</feature>
<feature type="modified residue" description="N-acetylalanine" evidence="2">
    <location>
        <position position="2"/>
    </location>
</feature>
<feature type="modified residue" description="Phosphotyrosine" evidence="3">
    <location>
        <position position="132"/>
    </location>
</feature>
<feature type="modified residue" description="Phosphotyrosine" evidence="3">
    <location>
        <position position="133"/>
    </location>
</feature>
<feature type="splice variant" id="VSP_050726" description="In isoform 2." evidence="5 6 7">
    <original>RIDSAATSTYEVGNPPDYRGQNCMRKHGIHMQHI</original>
    <variation>AIDSSAVSDWNVGRPPDPRAVSCLRNRGISTAHK</variation>
    <location>
        <begin position="41"/>
        <end position="74"/>
    </location>
</feature>
<feature type="sequence variant" evidence="4">
    <original>L</original>
    <variation>P</variation>
    <location>
        <position position="14"/>
    </location>
</feature>
<feature type="sequence variant" evidence="4">
    <original>T</original>
    <variation>P</variation>
    <location>
        <position position="157"/>
    </location>
</feature>
<feature type="strand" evidence="12">
    <location>
        <begin position="7"/>
        <end position="18"/>
    </location>
</feature>
<feature type="helix" evidence="12">
    <location>
        <begin position="19"/>
        <end position="33"/>
    </location>
</feature>
<feature type="helix" evidence="12">
    <location>
        <begin position="37"/>
        <end position="39"/>
    </location>
</feature>
<feature type="strand" evidence="12">
    <location>
        <begin position="40"/>
        <end position="49"/>
    </location>
</feature>
<feature type="turn" evidence="12">
    <location>
        <begin position="50"/>
        <end position="53"/>
    </location>
</feature>
<feature type="helix" evidence="12">
    <location>
        <begin position="58"/>
        <end position="66"/>
    </location>
</feature>
<feature type="helix" evidence="12">
    <location>
        <begin position="80"/>
        <end position="85"/>
    </location>
</feature>
<feature type="strand" evidence="12">
    <location>
        <begin position="87"/>
        <end position="93"/>
    </location>
</feature>
<feature type="helix" evidence="12">
    <location>
        <begin position="94"/>
        <end position="105"/>
    </location>
</feature>
<feature type="strand" evidence="12">
    <location>
        <begin position="113"/>
        <end position="116"/>
    </location>
</feature>
<feature type="helix" evidence="12">
    <location>
        <begin position="117"/>
        <end position="120"/>
    </location>
</feature>
<feature type="helix" evidence="13">
    <location>
        <begin position="131"/>
        <end position="133"/>
    </location>
</feature>
<feature type="helix" evidence="12">
    <location>
        <begin position="136"/>
        <end position="157"/>
    </location>
</feature>
<feature type="sequence variant" evidence="8">
    <original>R</original>
    <variation>H</variation>
    <location sequence="Q9D358-2">
        <position position="67"/>
    </location>
</feature>
<evidence type="ECO:0000250" key="1"/>
<evidence type="ECO:0000250" key="2">
    <source>
        <dbReference type="UniProtKB" id="P11064"/>
    </source>
</evidence>
<evidence type="ECO:0000250" key="3">
    <source>
        <dbReference type="UniProtKB" id="P24666"/>
    </source>
</evidence>
<evidence type="ECO:0000269" key="4">
    <source>
    </source>
</evidence>
<evidence type="ECO:0000303" key="5">
    <source>
    </source>
</evidence>
<evidence type="ECO:0000303" key="6">
    <source>
    </source>
</evidence>
<evidence type="ECO:0000303" key="7">
    <source>
    </source>
</evidence>
<evidence type="ECO:0000305" key="8"/>
<evidence type="ECO:0000312" key="9">
    <source>
        <dbReference type="EMBL" id="AAH39744.1"/>
    </source>
</evidence>
<evidence type="ECO:0000312" key="10">
    <source>
        <dbReference type="EMBL" id="CAA76753.1"/>
    </source>
</evidence>
<evidence type="ECO:0000312" key="11">
    <source>
        <dbReference type="MGI" id="MGI:87881"/>
    </source>
</evidence>
<evidence type="ECO:0007829" key="12">
    <source>
        <dbReference type="PDB" id="2P4U"/>
    </source>
</evidence>
<evidence type="ECO:0007829" key="13">
    <source>
        <dbReference type="PDB" id="5JNU"/>
    </source>
</evidence>
<gene>
    <name evidence="11" type="primary">Acp1</name>
</gene>
<proteinExistence type="evidence at protein level"/>
<reference evidence="8" key="1">
    <citation type="journal article" date="1998" name="FEBS Lett.">
        <title>Cloning of murine low molecular weight phosphotyrosine protein phosphatase cDNA: identification of a new isoform.</title>
        <authorList>
            <person name="Magherini F."/>
            <person name="Giannoni E."/>
            <person name="Raugei G."/>
            <person name="Cirri P."/>
            <person name="Paoli P."/>
            <person name="Modesti A."/>
            <person name="Camici G."/>
            <person name="Ramponi G."/>
        </authorList>
    </citation>
    <scope>NUCLEOTIDE SEQUENCE [MRNA] (ISOFORMS 1 AND 2)</scope>
    <scope>TISSUE SPECIFICITY</scope>
    <scope>VARIANTS PRO-14 AND PRO-157</scope>
    <source>
        <tissue evidence="10">Liver</tissue>
    </source>
</reference>
<reference key="2">
    <citation type="journal article" date="2005" name="Science">
        <title>The transcriptional landscape of the mammalian genome.</title>
        <authorList>
            <person name="Carninci P."/>
            <person name="Kasukawa T."/>
            <person name="Katayama S."/>
            <person name="Gough J."/>
            <person name="Frith M.C."/>
            <person name="Maeda N."/>
            <person name="Oyama R."/>
            <person name="Ravasi T."/>
            <person name="Lenhard B."/>
            <person name="Wells C."/>
            <person name="Kodzius R."/>
            <person name="Shimokawa K."/>
            <person name="Bajic V.B."/>
            <person name="Brenner S.E."/>
            <person name="Batalov S."/>
            <person name="Forrest A.R."/>
            <person name="Zavolan M."/>
            <person name="Davis M.J."/>
            <person name="Wilming L.G."/>
            <person name="Aidinis V."/>
            <person name="Allen J.E."/>
            <person name="Ambesi-Impiombato A."/>
            <person name="Apweiler R."/>
            <person name="Aturaliya R.N."/>
            <person name="Bailey T.L."/>
            <person name="Bansal M."/>
            <person name="Baxter L."/>
            <person name="Beisel K.W."/>
            <person name="Bersano T."/>
            <person name="Bono H."/>
            <person name="Chalk A.M."/>
            <person name="Chiu K.P."/>
            <person name="Choudhary V."/>
            <person name="Christoffels A."/>
            <person name="Clutterbuck D.R."/>
            <person name="Crowe M.L."/>
            <person name="Dalla E."/>
            <person name="Dalrymple B.P."/>
            <person name="de Bono B."/>
            <person name="Della Gatta G."/>
            <person name="di Bernardo D."/>
            <person name="Down T."/>
            <person name="Engstrom P."/>
            <person name="Fagiolini M."/>
            <person name="Faulkner G."/>
            <person name="Fletcher C.F."/>
            <person name="Fukushima T."/>
            <person name="Furuno M."/>
            <person name="Futaki S."/>
            <person name="Gariboldi M."/>
            <person name="Georgii-Hemming P."/>
            <person name="Gingeras T.R."/>
            <person name="Gojobori T."/>
            <person name="Green R.E."/>
            <person name="Gustincich S."/>
            <person name="Harbers M."/>
            <person name="Hayashi Y."/>
            <person name="Hensch T.K."/>
            <person name="Hirokawa N."/>
            <person name="Hill D."/>
            <person name="Huminiecki L."/>
            <person name="Iacono M."/>
            <person name="Ikeo K."/>
            <person name="Iwama A."/>
            <person name="Ishikawa T."/>
            <person name="Jakt M."/>
            <person name="Kanapin A."/>
            <person name="Katoh M."/>
            <person name="Kawasawa Y."/>
            <person name="Kelso J."/>
            <person name="Kitamura H."/>
            <person name="Kitano H."/>
            <person name="Kollias G."/>
            <person name="Krishnan S.P."/>
            <person name="Kruger A."/>
            <person name="Kummerfeld S.K."/>
            <person name="Kurochkin I.V."/>
            <person name="Lareau L.F."/>
            <person name="Lazarevic D."/>
            <person name="Lipovich L."/>
            <person name="Liu J."/>
            <person name="Liuni S."/>
            <person name="McWilliam S."/>
            <person name="Madan Babu M."/>
            <person name="Madera M."/>
            <person name="Marchionni L."/>
            <person name="Matsuda H."/>
            <person name="Matsuzawa S."/>
            <person name="Miki H."/>
            <person name="Mignone F."/>
            <person name="Miyake S."/>
            <person name="Morris K."/>
            <person name="Mottagui-Tabar S."/>
            <person name="Mulder N."/>
            <person name="Nakano N."/>
            <person name="Nakauchi H."/>
            <person name="Ng P."/>
            <person name="Nilsson R."/>
            <person name="Nishiguchi S."/>
            <person name="Nishikawa S."/>
            <person name="Nori F."/>
            <person name="Ohara O."/>
            <person name="Okazaki Y."/>
            <person name="Orlando V."/>
            <person name="Pang K.C."/>
            <person name="Pavan W.J."/>
            <person name="Pavesi G."/>
            <person name="Pesole G."/>
            <person name="Petrovsky N."/>
            <person name="Piazza S."/>
            <person name="Reed J."/>
            <person name="Reid J.F."/>
            <person name="Ring B.Z."/>
            <person name="Ringwald M."/>
            <person name="Rost B."/>
            <person name="Ruan Y."/>
            <person name="Salzberg S.L."/>
            <person name="Sandelin A."/>
            <person name="Schneider C."/>
            <person name="Schoenbach C."/>
            <person name="Sekiguchi K."/>
            <person name="Semple C.A."/>
            <person name="Seno S."/>
            <person name="Sessa L."/>
            <person name="Sheng Y."/>
            <person name="Shibata Y."/>
            <person name="Shimada H."/>
            <person name="Shimada K."/>
            <person name="Silva D."/>
            <person name="Sinclair B."/>
            <person name="Sperling S."/>
            <person name="Stupka E."/>
            <person name="Sugiura K."/>
            <person name="Sultana R."/>
            <person name="Takenaka Y."/>
            <person name="Taki K."/>
            <person name="Tammoja K."/>
            <person name="Tan S.L."/>
            <person name="Tang S."/>
            <person name="Taylor M.S."/>
            <person name="Tegner J."/>
            <person name="Teichmann S.A."/>
            <person name="Ueda H.R."/>
            <person name="van Nimwegen E."/>
            <person name="Verardo R."/>
            <person name="Wei C.L."/>
            <person name="Yagi K."/>
            <person name="Yamanishi H."/>
            <person name="Zabarovsky E."/>
            <person name="Zhu S."/>
            <person name="Zimmer A."/>
            <person name="Hide W."/>
            <person name="Bult C."/>
            <person name="Grimmond S.M."/>
            <person name="Teasdale R.D."/>
            <person name="Liu E.T."/>
            <person name="Brusic V."/>
            <person name="Quackenbush J."/>
            <person name="Wahlestedt C."/>
            <person name="Mattick J.S."/>
            <person name="Hume D.A."/>
            <person name="Kai C."/>
            <person name="Sasaki D."/>
            <person name="Tomaru Y."/>
            <person name="Fukuda S."/>
            <person name="Kanamori-Katayama M."/>
            <person name="Suzuki M."/>
            <person name="Aoki J."/>
            <person name="Arakawa T."/>
            <person name="Iida J."/>
            <person name="Imamura K."/>
            <person name="Itoh M."/>
            <person name="Kato T."/>
            <person name="Kawaji H."/>
            <person name="Kawagashira N."/>
            <person name="Kawashima T."/>
            <person name="Kojima M."/>
            <person name="Kondo S."/>
            <person name="Konno H."/>
            <person name="Nakano K."/>
            <person name="Ninomiya N."/>
            <person name="Nishio T."/>
            <person name="Okada M."/>
            <person name="Plessy C."/>
            <person name="Shibata K."/>
            <person name="Shiraki T."/>
            <person name="Suzuki S."/>
            <person name="Tagami M."/>
            <person name="Waki K."/>
            <person name="Watahiki A."/>
            <person name="Okamura-Oho Y."/>
            <person name="Suzuki H."/>
            <person name="Kawai J."/>
            <person name="Hayashizaki Y."/>
        </authorList>
    </citation>
    <scope>NUCLEOTIDE SEQUENCE [LARGE SCALE MRNA] (ISOFORMS 1 AND 2)</scope>
    <source>
        <strain>C57BL/6J</strain>
        <tissue>Cerebellum</tissue>
        <tissue>Embryo</tissue>
        <tissue>Skin</tissue>
        <tissue>Spinal cord</tissue>
    </source>
</reference>
<reference evidence="8" key="3">
    <citation type="journal article" date="2004" name="Genome Res.">
        <title>The status, quality, and expansion of the NIH full-length cDNA project: the Mammalian Gene Collection (MGC).</title>
        <authorList>
            <consortium name="The MGC Project Team"/>
        </authorList>
    </citation>
    <scope>NUCLEOTIDE SEQUENCE [LARGE SCALE MRNA] (ISOFORM 2)</scope>
    <source>
        <strain evidence="9">FVB/N</strain>
    </source>
</reference>
<reference key="4">
    <citation type="journal article" date="2010" name="Cell">
        <title>A tissue-specific atlas of mouse protein phosphorylation and expression.</title>
        <authorList>
            <person name="Huttlin E.L."/>
            <person name="Jedrychowski M.P."/>
            <person name="Elias J.E."/>
            <person name="Goswami T."/>
            <person name="Rad R."/>
            <person name="Beausoleil S.A."/>
            <person name="Villen J."/>
            <person name="Haas W."/>
            <person name="Sowa M.E."/>
            <person name="Gygi S.P."/>
        </authorList>
    </citation>
    <scope>IDENTIFICATION BY MASS SPECTROMETRY [LARGE SCALE ANALYSIS]</scope>
    <source>
        <tissue>Brain</tissue>
        <tissue>Brown adipose tissue</tissue>
        <tissue>Heart</tissue>
        <tissue>Kidney</tissue>
        <tissue>Liver</tissue>
        <tissue>Lung</tissue>
        <tissue>Pancreas</tissue>
        <tissue>Spleen</tissue>
        <tissue>Testis</tissue>
    </source>
</reference>
<reference key="5">
    <citation type="journal article" date="2007" name="J. Struct. Funct. Genomics">
        <title>Structural genomics of protein phosphatases.</title>
        <authorList>
            <person name="Almo S.C."/>
            <person name="Bonanno J.B."/>
            <person name="Sauder J.M."/>
            <person name="Emtage S."/>
            <person name="Dilorenzo T.P."/>
            <person name="Malashkevich V."/>
            <person name="Wasserman S.R."/>
            <person name="Swaminathan S."/>
            <person name="Eswaramoorthy S."/>
            <person name="Agarwal R."/>
            <person name="Kumaran D."/>
            <person name="Madegowda M."/>
            <person name="Ragumani S."/>
            <person name="Patskovsky Y."/>
            <person name="Alvarado J."/>
            <person name="Ramagopal U.A."/>
            <person name="Faber-Barata J."/>
            <person name="Chance M.R."/>
            <person name="Sali A."/>
            <person name="Fiser A."/>
            <person name="Zhang Z.Y."/>
            <person name="Lawrence D.S."/>
            <person name="Burley S.K."/>
        </authorList>
    </citation>
    <scope>X-RAY CRYSTALLOGRAPHY (1.9 ANGSTROMS) OF 2-158</scope>
</reference>
<sequence>MAEVGSKSVLFVCLGNICRSPIAEAVFRKLVTDEKVSDNWRIDSAATSTYEVGNPPDYRGQNCMRKHGIHMQHIARQITKEDFATFDYILCMDESNLRDLNRKSNQVKNCKAKIELLGSYDPQKQLIIEDPYYGNDSDFEVVYQQCLRCCKAFLEKTY</sequence>
<dbReference type="EC" id="3.1.3.48" evidence="3"/>
<dbReference type="EC" id="3.1.3.2" evidence="3"/>
<dbReference type="EMBL" id="Y17343">
    <property type="protein sequence ID" value="CAA76753.1"/>
    <property type="molecule type" value="mRNA"/>
</dbReference>
<dbReference type="EMBL" id="Y17344">
    <property type="protein sequence ID" value="CAA76754.1"/>
    <property type="molecule type" value="mRNA"/>
</dbReference>
<dbReference type="EMBL" id="Y17345">
    <property type="protein sequence ID" value="CAA76755.1"/>
    <property type="molecule type" value="mRNA"/>
</dbReference>
<dbReference type="EMBL" id="AK014603">
    <property type="protein sequence ID" value="BAB29458.1"/>
    <property type="molecule type" value="mRNA"/>
</dbReference>
<dbReference type="EMBL" id="AK018329">
    <property type="protein sequence ID" value="BAB31164.1"/>
    <property type="molecule type" value="mRNA"/>
</dbReference>
<dbReference type="EMBL" id="AK019186">
    <property type="protein sequence ID" value="BAB31593.1"/>
    <property type="molecule type" value="mRNA"/>
</dbReference>
<dbReference type="EMBL" id="AK082955">
    <property type="protein sequence ID" value="BAC38707.1"/>
    <property type="molecule type" value="mRNA"/>
</dbReference>
<dbReference type="EMBL" id="BC039744">
    <property type="protein sequence ID" value="AAH39744.1"/>
    <property type="molecule type" value="mRNA"/>
</dbReference>
<dbReference type="CCDS" id="CCDS36427.1">
    <molecule id="Q9D358-1"/>
</dbReference>
<dbReference type="CCDS" id="CCDS49045.1">
    <molecule id="Q9D358-2"/>
</dbReference>
<dbReference type="RefSeq" id="NP_001103709.1">
    <property type="nucleotide sequence ID" value="NM_001110239.1"/>
</dbReference>
<dbReference type="RefSeq" id="NP_067305.2">
    <molecule id="Q9D358-1"/>
    <property type="nucleotide sequence ID" value="NM_021330.4"/>
</dbReference>
<dbReference type="PDB" id="2P4U">
    <property type="method" value="X-ray"/>
    <property type="resolution" value="1.90 A"/>
    <property type="chains" value="A/B/C/D=2-158"/>
</dbReference>
<dbReference type="PDB" id="5JNU">
    <property type="method" value="X-ray"/>
    <property type="resolution" value="2.54 A"/>
    <property type="chains" value="A/B=1-158"/>
</dbReference>
<dbReference type="PDBsum" id="2P4U"/>
<dbReference type="PDBsum" id="5JNU"/>
<dbReference type="SMR" id="Q9D358"/>
<dbReference type="BioGRID" id="197927">
    <property type="interactions" value="10"/>
</dbReference>
<dbReference type="FunCoup" id="Q9D358">
    <property type="interactions" value="1539"/>
</dbReference>
<dbReference type="IntAct" id="Q9D358">
    <property type="interactions" value="2"/>
</dbReference>
<dbReference type="STRING" id="10090.ENSMUSP00000106509"/>
<dbReference type="BindingDB" id="Q9D358"/>
<dbReference type="ChEMBL" id="CHEMBL3593153"/>
<dbReference type="iPTMnet" id="Q9D358"/>
<dbReference type="PhosphoSitePlus" id="Q9D358"/>
<dbReference type="REPRODUCTION-2DPAGE" id="Q9D358"/>
<dbReference type="CPTAC" id="non-CPTAC-3861"/>
<dbReference type="jPOST" id="Q9D358"/>
<dbReference type="PaxDb" id="10090-ENSMUSP00000106509"/>
<dbReference type="PeptideAtlas" id="Q9D358"/>
<dbReference type="ProteomicsDB" id="291644">
    <molecule id="Q9D358-1"/>
</dbReference>
<dbReference type="ProteomicsDB" id="291645">
    <molecule id="Q9D358-2"/>
</dbReference>
<dbReference type="Pumba" id="Q9D358"/>
<dbReference type="DNASU" id="11431"/>
<dbReference type="Ensembl" id="ENSMUST00000062740.15">
    <molecule id="Q9D358-1"/>
    <property type="protein sequence ID" value="ENSMUSP00000106509.4"/>
    <property type="gene ID" value="ENSMUSG00000044573.17"/>
</dbReference>
<dbReference type="GeneID" id="11431"/>
<dbReference type="KEGG" id="mmu:11431"/>
<dbReference type="UCSC" id="uc007ngw.2">
    <molecule id="Q9D358-1"/>
    <property type="organism name" value="mouse"/>
</dbReference>
<dbReference type="AGR" id="MGI:87881"/>
<dbReference type="CTD" id="52"/>
<dbReference type="MGI" id="MGI:87881">
    <property type="gene designation" value="Acp1"/>
</dbReference>
<dbReference type="VEuPathDB" id="HostDB:ENSMUSG00000044573"/>
<dbReference type="eggNOG" id="KOG3217">
    <property type="taxonomic scope" value="Eukaryota"/>
</dbReference>
<dbReference type="GeneTree" id="ENSGT00940000158351"/>
<dbReference type="HOGENOM" id="CLU_071415_2_0_1"/>
<dbReference type="InParanoid" id="Q9D358"/>
<dbReference type="OrthoDB" id="3388at2759"/>
<dbReference type="PhylomeDB" id="Q9D358"/>
<dbReference type="TreeFam" id="TF353727"/>
<dbReference type="BioGRID-ORCS" id="11431">
    <property type="hits" value="4 hits in 79 CRISPR screens"/>
</dbReference>
<dbReference type="ChiTaRS" id="Acp1">
    <property type="organism name" value="mouse"/>
</dbReference>
<dbReference type="EvolutionaryTrace" id="Q9D358"/>
<dbReference type="PRO" id="PR:Q9D358"/>
<dbReference type="Proteomes" id="UP000000589">
    <property type="component" value="Chromosome 12"/>
</dbReference>
<dbReference type="RNAct" id="Q9D358">
    <property type="molecule type" value="protein"/>
</dbReference>
<dbReference type="Bgee" id="ENSMUSG00000044573">
    <property type="expression patterns" value="Expressed in mesodermal cell in embryo and 162 other cell types or tissues"/>
</dbReference>
<dbReference type="ExpressionAtlas" id="Q9D358">
    <property type="expression patterns" value="baseline and differential"/>
</dbReference>
<dbReference type="GO" id="GO:0009898">
    <property type="term" value="C:cytoplasmic side of plasma membrane"/>
    <property type="evidence" value="ECO:0007669"/>
    <property type="project" value="Ensembl"/>
</dbReference>
<dbReference type="GO" id="GO:0005829">
    <property type="term" value="C:cytosol"/>
    <property type="evidence" value="ECO:0000314"/>
    <property type="project" value="MGI"/>
</dbReference>
<dbReference type="GO" id="GO:0042383">
    <property type="term" value="C:sarcolemma"/>
    <property type="evidence" value="ECO:0000314"/>
    <property type="project" value="MGI"/>
</dbReference>
<dbReference type="GO" id="GO:0003993">
    <property type="term" value="F:acid phosphatase activity"/>
    <property type="evidence" value="ECO:0000314"/>
    <property type="project" value="MGI"/>
</dbReference>
<dbReference type="GO" id="GO:0004726">
    <property type="term" value="F:non-membrane spanning protein tyrosine phosphatase activity"/>
    <property type="evidence" value="ECO:0007669"/>
    <property type="project" value="InterPro"/>
</dbReference>
<dbReference type="GO" id="GO:0016791">
    <property type="term" value="F:phosphatase activity"/>
    <property type="evidence" value="ECO:0000314"/>
    <property type="project" value="MGI"/>
</dbReference>
<dbReference type="GO" id="GO:0004725">
    <property type="term" value="F:protein tyrosine phosphatase activity"/>
    <property type="evidence" value="ECO:0000250"/>
    <property type="project" value="UniProtKB"/>
</dbReference>
<dbReference type="CDD" id="cd16343">
    <property type="entry name" value="LMWPTP"/>
    <property type="match status" value="1"/>
</dbReference>
<dbReference type="FunFam" id="3.40.50.2300:FF:000105">
    <property type="entry name" value="Low molecular weight phosphotyrosine protein"/>
    <property type="match status" value="1"/>
</dbReference>
<dbReference type="Gene3D" id="3.40.50.2300">
    <property type="match status" value="1"/>
</dbReference>
<dbReference type="InterPro" id="IPR050438">
    <property type="entry name" value="LMW_PTPase"/>
</dbReference>
<dbReference type="InterPro" id="IPR023485">
    <property type="entry name" value="Ptyr_pPase"/>
</dbReference>
<dbReference type="InterPro" id="IPR036196">
    <property type="entry name" value="Ptyr_pPase_sf"/>
</dbReference>
<dbReference type="InterPro" id="IPR002115">
    <property type="entry name" value="Tyr_Pase_low_mol_wt_mml"/>
</dbReference>
<dbReference type="InterPro" id="IPR017867">
    <property type="entry name" value="Tyr_phospatase_low_mol_wt"/>
</dbReference>
<dbReference type="PANTHER" id="PTHR11717:SF34">
    <property type="entry name" value="LOW MOLECULAR WEIGHT PHOSPHOTYROSINE PROTEIN PHOSPHATASE"/>
    <property type="match status" value="1"/>
</dbReference>
<dbReference type="PANTHER" id="PTHR11717">
    <property type="entry name" value="LOW MOLECULAR WEIGHT PROTEIN TYROSINE PHOSPHATASE"/>
    <property type="match status" value="1"/>
</dbReference>
<dbReference type="Pfam" id="PF01451">
    <property type="entry name" value="LMWPc"/>
    <property type="match status" value="1"/>
</dbReference>
<dbReference type="PRINTS" id="PR00719">
    <property type="entry name" value="LMWPTPASE"/>
</dbReference>
<dbReference type="PRINTS" id="PR00720">
    <property type="entry name" value="MAMMALPTPASE"/>
</dbReference>
<dbReference type="SMART" id="SM00226">
    <property type="entry name" value="LMWPc"/>
    <property type="match status" value="1"/>
</dbReference>
<dbReference type="SUPFAM" id="SSF52788">
    <property type="entry name" value="Phosphotyrosine protein phosphatases I"/>
    <property type="match status" value="1"/>
</dbReference>
<comment type="function">
    <text evidence="3">Acts on tyrosine phosphorylated proteins, low-MW aryl phosphates and natural and synthetic acyl phosphates with differences in substrate specificity between isoform 1 and isoform 2.</text>
</comment>
<comment type="catalytic activity">
    <reaction evidence="3">
        <text>O-phospho-L-tyrosyl-[protein] + H2O = L-tyrosyl-[protein] + phosphate</text>
        <dbReference type="Rhea" id="RHEA:10684"/>
        <dbReference type="Rhea" id="RHEA-COMP:10136"/>
        <dbReference type="Rhea" id="RHEA-COMP:20101"/>
        <dbReference type="ChEBI" id="CHEBI:15377"/>
        <dbReference type="ChEBI" id="CHEBI:43474"/>
        <dbReference type="ChEBI" id="CHEBI:46858"/>
        <dbReference type="ChEBI" id="CHEBI:61978"/>
        <dbReference type="EC" id="3.1.3.48"/>
    </reaction>
    <physiologicalReaction direction="left-to-right" evidence="3">
        <dbReference type="Rhea" id="RHEA:10685"/>
    </physiologicalReaction>
</comment>
<comment type="catalytic activity">
    <reaction evidence="3">
        <text>a phosphate monoester + H2O = an alcohol + phosphate</text>
        <dbReference type="Rhea" id="RHEA:15017"/>
        <dbReference type="ChEBI" id="CHEBI:15377"/>
        <dbReference type="ChEBI" id="CHEBI:30879"/>
        <dbReference type="ChEBI" id="CHEBI:43474"/>
        <dbReference type="ChEBI" id="CHEBI:67140"/>
        <dbReference type="EC" id="3.1.3.2"/>
    </reaction>
    <physiologicalReaction direction="left-to-right" evidence="3">
        <dbReference type="Rhea" id="RHEA:15018"/>
    </physiologicalReaction>
</comment>
<comment type="activity regulation">
    <text evidence="3">Inhibited by sulfhydryl reagents.</text>
</comment>
<comment type="subunit">
    <text evidence="3">Interacts with EPHA2; dephosphorylates EPHA2. Interacts with EPHB1.</text>
</comment>
<comment type="subunit">
    <molecule>Isoform 1</molecule>
    <text evidence="3">Interacts with the SH3 domain of SPTAN1. There is no interaction observed for isoform 2.</text>
</comment>
<comment type="subcellular location">
    <subcellularLocation>
        <location evidence="1">Cytoplasm</location>
    </subcellularLocation>
</comment>
<comment type="alternative products">
    <event type="alternative splicing"/>
    <isoform>
        <id>Q9D358-1</id>
        <name evidence="4">1</name>
        <name evidence="7">m-IF1</name>
        <sequence type="displayed"/>
    </isoform>
    <isoform>
        <id>Q9D358-2</id>
        <name evidence="4">2</name>
        <name evidence="7">m-IF2</name>
        <sequence type="described" ref="VSP_050726"/>
    </isoform>
</comment>
<comment type="tissue specificity">
    <text evidence="4">Widely expressed with highest levels in brain and liver and lowest levels in muscle.</text>
</comment>
<comment type="PTM">
    <molecule>Isoform 2</molecule>
    <text evidence="3">Phosphorylated by LCK. Phosphorylation at Tyr-132 increases its phosphatase activity.</text>
</comment>
<comment type="similarity">
    <text evidence="8">Belongs to the low molecular weight phosphotyrosine protein phosphatase family.</text>
</comment>
<keyword id="KW-0002">3D-structure</keyword>
<keyword id="KW-0007">Acetylation</keyword>
<keyword id="KW-0025">Alternative splicing</keyword>
<keyword id="KW-0963">Cytoplasm</keyword>
<keyword id="KW-0378">Hydrolase</keyword>
<keyword id="KW-0597">Phosphoprotein</keyword>
<keyword id="KW-0904">Protein phosphatase</keyword>
<keyword id="KW-1185">Reference proteome</keyword>
<name>PPAC_MOUSE</name>
<organism evidence="10">
    <name type="scientific">Mus musculus</name>
    <name type="common">Mouse</name>
    <dbReference type="NCBI Taxonomy" id="10090"/>
    <lineage>
        <taxon>Eukaryota</taxon>
        <taxon>Metazoa</taxon>
        <taxon>Chordata</taxon>
        <taxon>Craniata</taxon>
        <taxon>Vertebrata</taxon>
        <taxon>Euteleostomi</taxon>
        <taxon>Mammalia</taxon>
        <taxon>Eutheria</taxon>
        <taxon>Euarchontoglires</taxon>
        <taxon>Glires</taxon>
        <taxon>Rodentia</taxon>
        <taxon>Myomorpha</taxon>
        <taxon>Muroidea</taxon>
        <taxon>Muridae</taxon>
        <taxon>Murinae</taxon>
        <taxon>Mus</taxon>
        <taxon>Mus</taxon>
    </lineage>
</organism>
<protein>
    <recommendedName>
        <fullName evidence="8">Low molecular weight phosphotyrosine protein phosphatase</fullName>
        <shortName>LMW-PTP</shortName>
        <shortName>LMW-PTPase</shortName>
        <ecNumber evidence="3">3.1.3.48</ecNumber>
    </recommendedName>
    <alternativeName>
        <fullName>Low molecular weight cytosolic acid phosphatase</fullName>
        <ecNumber evidence="3">3.1.3.2</ecNumber>
    </alternativeName>
</protein>